<evidence type="ECO:0000255" key="1">
    <source>
        <dbReference type="HAMAP-Rule" id="MF_00009"/>
    </source>
</evidence>
<accession>A1SHY8</accession>
<comment type="function">
    <text evidence="1">Single strand-specific metallo-endoribonuclease involved in late-stage 70S ribosome quality control and in maturation of the 3' terminus of the 16S rRNA.</text>
</comment>
<comment type="cofactor">
    <cofactor evidence="1">
        <name>Zn(2+)</name>
        <dbReference type="ChEBI" id="CHEBI:29105"/>
    </cofactor>
    <text evidence="1">Binds 1 zinc ion.</text>
</comment>
<comment type="subcellular location">
    <subcellularLocation>
        <location evidence="1">Cytoplasm</location>
    </subcellularLocation>
</comment>
<comment type="similarity">
    <text evidence="1">Belongs to the endoribonuclease YbeY family.</text>
</comment>
<protein>
    <recommendedName>
        <fullName evidence="1">Endoribonuclease YbeY</fullName>
        <ecNumber evidence="1">3.1.-.-</ecNumber>
    </recommendedName>
</protein>
<name>YBEY_NOCSJ</name>
<keyword id="KW-0963">Cytoplasm</keyword>
<keyword id="KW-0255">Endonuclease</keyword>
<keyword id="KW-0378">Hydrolase</keyword>
<keyword id="KW-0479">Metal-binding</keyword>
<keyword id="KW-0540">Nuclease</keyword>
<keyword id="KW-1185">Reference proteome</keyword>
<keyword id="KW-0690">Ribosome biogenesis</keyword>
<keyword id="KW-0698">rRNA processing</keyword>
<keyword id="KW-0862">Zinc</keyword>
<feature type="chain" id="PRO_1000000731" description="Endoribonuclease YbeY">
    <location>
        <begin position="1"/>
        <end position="149"/>
    </location>
</feature>
<feature type="binding site" evidence="1">
    <location>
        <position position="116"/>
    </location>
    <ligand>
        <name>Zn(2+)</name>
        <dbReference type="ChEBI" id="CHEBI:29105"/>
        <note>catalytic</note>
    </ligand>
</feature>
<feature type="binding site" evidence="1">
    <location>
        <position position="120"/>
    </location>
    <ligand>
        <name>Zn(2+)</name>
        <dbReference type="ChEBI" id="CHEBI:29105"/>
        <note>catalytic</note>
    </ligand>
</feature>
<feature type="binding site" evidence="1">
    <location>
        <position position="126"/>
    </location>
    <ligand>
        <name>Zn(2+)</name>
        <dbReference type="ChEBI" id="CHEBI:29105"/>
        <note>catalytic</note>
    </ligand>
</feature>
<gene>
    <name evidence="1" type="primary">ybeY</name>
    <name type="ordered locus">Noca_1913</name>
</gene>
<sequence length="149" mass="16580">MSIEILNESGHPLDVKRLAALSRFVMDRMRVHPLAELCIKAVDEPTIAQLNEQWMEKAGPTDVLAFPMDELRPGLVDEDPEEGVLGDLVLCPDVAARQGETAGHGTEAEIELLTVHGILHLLGYDHAEPEEHREMFGLQDELLAAWRAR</sequence>
<proteinExistence type="inferred from homology"/>
<reference key="1">
    <citation type="submission" date="2006-12" db="EMBL/GenBank/DDBJ databases">
        <title>Complete sequence of chromosome 1 of Nocardioides sp. JS614.</title>
        <authorList>
            <person name="Copeland A."/>
            <person name="Lucas S."/>
            <person name="Lapidus A."/>
            <person name="Barry K."/>
            <person name="Detter J.C."/>
            <person name="Glavina del Rio T."/>
            <person name="Hammon N."/>
            <person name="Israni S."/>
            <person name="Dalin E."/>
            <person name="Tice H."/>
            <person name="Pitluck S."/>
            <person name="Thompson L.S."/>
            <person name="Brettin T."/>
            <person name="Bruce D."/>
            <person name="Han C."/>
            <person name="Tapia R."/>
            <person name="Schmutz J."/>
            <person name="Larimer F."/>
            <person name="Land M."/>
            <person name="Hauser L."/>
            <person name="Kyrpides N."/>
            <person name="Kim E."/>
            <person name="Mattes T."/>
            <person name="Gossett J."/>
            <person name="Richardson P."/>
        </authorList>
    </citation>
    <scope>NUCLEOTIDE SEQUENCE [LARGE SCALE GENOMIC DNA]</scope>
    <source>
        <strain>ATCC BAA-499 / JS614</strain>
    </source>
</reference>
<organism>
    <name type="scientific">Nocardioides sp. (strain ATCC BAA-499 / JS614)</name>
    <dbReference type="NCBI Taxonomy" id="196162"/>
    <lineage>
        <taxon>Bacteria</taxon>
        <taxon>Bacillati</taxon>
        <taxon>Actinomycetota</taxon>
        <taxon>Actinomycetes</taxon>
        <taxon>Propionibacteriales</taxon>
        <taxon>Nocardioidaceae</taxon>
        <taxon>Nocardioides</taxon>
    </lineage>
</organism>
<dbReference type="EC" id="3.1.-.-" evidence="1"/>
<dbReference type="EMBL" id="CP000509">
    <property type="protein sequence ID" value="ABL81423.1"/>
    <property type="molecule type" value="Genomic_DNA"/>
</dbReference>
<dbReference type="RefSeq" id="WP_011755370.1">
    <property type="nucleotide sequence ID" value="NC_008699.1"/>
</dbReference>
<dbReference type="SMR" id="A1SHY8"/>
<dbReference type="STRING" id="196162.Noca_1913"/>
<dbReference type="KEGG" id="nca:Noca_1913"/>
<dbReference type="eggNOG" id="COG0319">
    <property type="taxonomic scope" value="Bacteria"/>
</dbReference>
<dbReference type="HOGENOM" id="CLU_106710_3_2_11"/>
<dbReference type="OrthoDB" id="9807740at2"/>
<dbReference type="Proteomes" id="UP000000640">
    <property type="component" value="Chromosome"/>
</dbReference>
<dbReference type="GO" id="GO:0005737">
    <property type="term" value="C:cytoplasm"/>
    <property type="evidence" value="ECO:0007669"/>
    <property type="project" value="UniProtKB-SubCell"/>
</dbReference>
<dbReference type="GO" id="GO:0004222">
    <property type="term" value="F:metalloendopeptidase activity"/>
    <property type="evidence" value="ECO:0007669"/>
    <property type="project" value="InterPro"/>
</dbReference>
<dbReference type="GO" id="GO:0004521">
    <property type="term" value="F:RNA endonuclease activity"/>
    <property type="evidence" value="ECO:0007669"/>
    <property type="project" value="UniProtKB-UniRule"/>
</dbReference>
<dbReference type="GO" id="GO:0008270">
    <property type="term" value="F:zinc ion binding"/>
    <property type="evidence" value="ECO:0007669"/>
    <property type="project" value="UniProtKB-UniRule"/>
</dbReference>
<dbReference type="GO" id="GO:0006364">
    <property type="term" value="P:rRNA processing"/>
    <property type="evidence" value="ECO:0007669"/>
    <property type="project" value="UniProtKB-UniRule"/>
</dbReference>
<dbReference type="Gene3D" id="3.40.390.30">
    <property type="entry name" value="Metalloproteases ('zincins'), catalytic domain"/>
    <property type="match status" value="1"/>
</dbReference>
<dbReference type="HAMAP" id="MF_00009">
    <property type="entry name" value="Endoribonucl_YbeY"/>
    <property type="match status" value="1"/>
</dbReference>
<dbReference type="InterPro" id="IPR023091">
    <property type="entry name" value="MetalPrtase_cat_dom_sf_prd"/>
</dbReference>
<dbReference type="InterPro" id="IPR002036">
    <property type="entry name" value="YbeY"/>
</dbReference>
<dbReference type="InterPro" id="IPR020549">
    <property type="entry name" value="YbeY_CS"/>
</dbReference>
<dbReference type="NCBIfam" id="TIGR00043">
    <property type="entry name" value="rRNA maturation RNase YbeY"/>
    <property type="match status" value="1"/>
</dbReference>
<dbReference type="PANTHER" id="PTHR46986">
    <property type="entry name" value="ENDORIBONUCLEASE YBEY, CHLOROPLASTIC"/>
    <property type="match status" value="1"/>
</dbReference>
<dbReference type="PANTHER" id="PTHR46986:SF1">
    <property type="entry name" value="ENDORIBONUCLEASE YBEY, CHLOROPLASTIC"/>
    <property type="match status" value="1"/>
</dbReference>
<dbReference type="Pfam" id="PF02130">
    <property type="entry name" value="YbeY"/>
    <property type="match status" value="1"/>
</dbReference>
<dbReference type="SUPFAM" id="SSF55486">
    <property type="entry name" value="Metalloproteases ('zincins'), catalytic domain"/>
    <property type="match status" value="1"/>
</dbReference>
<dbReference type="PROSITE" id="PS01306">
    <property type="entry name" value="UPF0054"/>
    <property type="match status" value="1"/>
</dbReference>